<feature type="chain" id="PRO_0000053512" description="Nuclear receptor ROR-alpha">
    <location>
        <begin position="1"/>
        <end position="523"/>
    </location>
</feature>
<feature type="domain" description="NR LBD" evidence="4">
    <location>
        <begin position="272"/>
        <end position="510"/>
    </location>
</feature>
<feature type="DNA-binding region" description="Nuclear receptor" evidence="3">
    <location>
        <begin position="73"/>
        <end position="138"/>
    </location>
</feature>
<feature type="zinc finger region" description="NR C4-type" evidence="3">
    <location>
        <begin position="73"/>
        <end position="93"/>
    </location>
</feature>
<feature type="zinc finger region" description="NR C4-type" evidence="3">
    <location>
        <begin position="109"/>
        <end position="133"/>
    </location>
</feature>
<feature type="region of interest" description="Disordered" evidence="5">
    <location>
        <begin position="1"/>
        <end position="63"/>
    </location>
</feature>
<feature type="region of interest" description="Disordered" evidence="5">
    <location>
        <begin position="154"/>
        <end position="183"/>
    </location>
</feature>
<feature type="short sequence motif" description="AF-2">
    <location>
        <begin position="506"/>
        <end position="523"/>
    </location>
</feature>
<feature type="compositionally biased region" description="Low complexity" evidence="5">
    <location>
        <begin position="1"/>
        <end position="26"/>
    </location>
</feature>
<feature type="compositionally biased region" description="Polar residues" evidence="5">
    <location>
        <begin position="48"/>
        <end position="57"/>
    </location>
</feature>
<feature type="modified residue" description="N6-methyllysine" evidence="25">
    <location>
        <position position="38"/>
    </location>
</feature>
<feature type="modified residue" description="Phosphothreonine; by MAPK1" evidence="16">
    <location>
        <position position="183"/>
    </location>
</feature>
<feature type="cross-link" description="Glycyl lysine isopeptide (Lys-Gly) (interchain with G-Cter in SUMO)" evidence="20">
    <location>
        <position position="240"/>
    </location>
</feature>
<feature type="splice variant" id="VSP_053973" description="In isoform 2." evidence="33">
    <original>MESAPAAPDPAASEPGSSGADAAAGSRETPLNQESARKSEPPAPVRRQSYSSTSRGISVTKKTHTS</original>
    <variation>MNEGAPGDSDLETEARVPWSIMGHCLRTGQARMSATPTPAGEGARRDELFGILQILHQCILSSGDAFVLTGVCCSWRQNGKPPYSQKEDKEVQTGYMNA</variation>
    <location>
        <begin position="1"/>
        <end position="66"/>
    </location>
</feature>
<feature type="splice variant" id="VSP_053974" description="In isoform 4." evidence="31 32 34">
    <original>MESAPAAPDPAASEPGSSGADAAAGSRETPLNQESARKSEPPAPVRRQSYSSTSRGISVTKKTHT</original>
    <variation>MMYFVIAAMK</variation>
    <location>
        <begin position="1"/>
        <end position="65"/>
    </location>
</feature>
<feature type="splice variant" id="VSP_053975" description="In isoform 3." evidence="33">
    <original>KSEPPAPVRRQSYSSTSRGISVTKKTHT</original>
    <variation>SSSTCSSLSRLFWSQLEHINWDGATAKNFINLREFFSFLLPALRK</variation>
    <location>
        <begin position="38"/>
        <end position="65"/>
    </location>
</feature>
<feature type="sequence variant" id="VAR_081089" description="In IDDECA; uncertain significance." evidence="26">
    <original>C</original>
    <variation>S</variation>
    <location>
        <position position="90"/>
    </location>
</feature>
<feature type="sequence variant" id="VAR_081090" description="In IDDECA; deleterious effect on embryonic development, when assayed in a heterologous system; dbSNP:rs1555427498." evidence="26">
    <original>G</original>
    <variation>A</variation>
    <location>
        <position position="92"/>
    </location>
</feature>
<feature type="sequence variant" id="VAR_081091" description="In IDDECA; deleterious effect on embryonic development, when assayed in a heterologous system; dbSNP:rs1555427497." evidence="26">
    <original>K</original>
    <variation>R</variation>
    <location>
        <position position="94"/>
    </location>
</feature>
<feature type="sequence variant" id="VAR_081092" description="In IDDECA." evidence="26">
    <original>S</original>
    <variation>R</variation>
    <location>
        <position position="409"/>
    </location>
</feature>
<feature type="sequence variant" id="VAR_081093" description="In IDDECA; loss of function in cerebellar development, when assayed in a heterologous system; dbSNP:rs1433850094." evidence="26">
    <original>R</original>
    <variation>Q</variation>
    <location>
        <position position="462"/>
    </location>
</feature>
<feature type="sequence variant" id="VAR_081094" description="No effect on cerebellar development, when assayed in a heterologous system; dbSNP:rs190933482." evidence="26">
    <original>T</original>
    <variation>A</variation>
    <location>
        <position position="476"/>
    </location>
</feature>
<feature type="sequence variant" id="VAR_081095" description="In IDDECA; uncertain significance." evidence="26">
    <location>
        <begin position="500"/>
        <end position="523"/>
    </location>
</feature>
<feature type="mutagenesis site" description="Greatly increased transcriptional activity. Decrease in repression by NR1D1." evidence="16">
    <original>T</original>
    <variation>A</variation>
    <location>
        <position position="183"/>
    </location>
</feature>
<feature type="mutagenesis site" description="Some increase in transcriptional activity. No change in repression by NR1D1." evidence="16">
    <original>T</original>
    <variation>D</variation>
    <variation>E</variation>
    <location>
        <position position="183"/>
    </location>
</feature>
<feature type="mutagenesis site" description="Attenuates transcriptional activity." evidence="16">
    <original>T</original>
    <variation>R</variation>
    <location>
        <position position="183"/>
    </location>
</feature>
<feature type="mutagenesis site" description="Some increase in transcriptional activity." evidence="16">
    <original>T</original>
    <variation>V</variation>
    <variation>I</variation>
    <location>
        <position position="183"/>
    </location>
</feature>
<feature type="mutagenesis site" description="Loss of sumoylation." evidence="20">
    <original>K</original>
    <variation>R</variation>
    <location>
        <position position="240"/>
    </location>
</feature>
<feature type="mutagenesis site" description="Less effect on transcriptional activity with cholesterol sulfate as substrate as compared to cholesterol as substrate." evidence="12">
    <original>C</original>
    <variation>Q</variation>
    <location>
        <position position="288"/>
    </location>
</feature>
<feature type="mutagenesis site" description="About 60% loss of transcriptional activity." evidence="10 12">
    <original>C</original>
    <variation>L</variation>
    <location>
        <position position="323"/>
    </location>
</feature>
<feature type="mutagenesis site" description="About 80% loss of transcriptional activity." evidence="10 12">
    <original>A</original>
    <variation>L</variation>
    <location>
        <position position="330"/>
    </location>
</feature>
<feature type="mutagenesis site" description="Strongly decreases interaction with NCOA2 and MED1." evidence="6">
    <original>V</original>
    <variation>R</variation>
    <location>
        <position position="335"/>
    </location>
</feature>
<feature type="mutagenesis site" description="Complete loss of transcriptional activity; when associated with A-507." evidence="12">
    <original>K</original>
    <variation>A</variation>
    <location>
        <position position="339"/>
    </location>
</feature>
<feature type="mutagenesis site" description="Increased transcriptional activity. No effect on protein degradation." evidence="11">
    <original>K</original>
    <variation>A</variation>
    <location>
        <position position="357"/>
    </location>
</feature>
<feature type="mutagenesis site" description="Small reduction in transcriptional activity. No protein degradation." evidence="11">
    <original>L</original>
    <variation>F</variation>
    <location>
        <position position="361"/>
    </location>
</feature>
<feature type="mutagenesis site" description="Greatly reduced transcriptional activity. Protects from protein degradation." evidence="11">
    <original>V</original>
    <variation>G</variation>
    <location>
        <position position="364"/>
    </location>
</feature>
<feature type="mutagenesis site" description="Almost total loss of transcriptional activity." evidence="10">
    <original>A</original>
    <variation>Q</variation>
    <location>
        <position position="371"/>
    </location>
</feature>
<feature type="mutagenesis site" description="Slight loss of transcriptional activity." evidence="10">
    <original>F</original>
    <variation>W</variation>
    <location>
        <position position="399"/>
    </location>
</feature>
<feature type="mutagenesis site" description="No effect on sumoylation." evidence="20">
    <original>K</original>
    <variation>R</variation>
    <location>
        <position position="441"/>
    </location>
</feature>
<feature type="mutagenesis site" description="Almost total loss of transcriptional activity." evidence="10">
    <original>H</original>
    <variation>W</variation>
    <location>
        <position position="484"/>
    </location>
</feature>
<feature type="mutagenesis site" description="Complete loss of transcriptional activity; when associated with A-339." evidence="10">
    <original>Y</original>
    <variation>A</variation>
    <location>
        <position position="507"/>
    </location>
</feature>
<feature type="mutagenesis site" description="About 40% loss of transcriptional activity." evidence="10">
    <original>Y</original>
    <variation>F</variation>
    <location>
        <position position="507"/>
    </location>
</feature>
<feature type="mutagenesis site" description="Abolishes transcriptional activity. Protects from protein degradation." evidence="11 12">
    <original>E</original>
    <variation>K</variation>
    <location>
        <position position="509"/>
    </location>
</feature>
<feature type="mutagenesis site" description="Decreases interaction with NCOA2. Loss of interaction with FOXP3." evidence="6 18">
    <original>LF</original>
    <variation>AA</variation>
    <location>
        <begin position="510"/>
        <end position="511"/>
    </location>
</feature>
<feature type="sequence conflict" description="In Ref. 2; AAA02963." evidence="35" ref="2">
    <original>M</original>
    <variation>V</variation>
    <location>
        <position position="368"/>
    </location>
</feature>
<feature type="sequence conflict" description="In Ref. 2; AAA02963." evidence="35" ref="2">
    <original>I</original>
    <variation>M</variation>
    <location>
        <position position="466"/>
    </location>
</feature>
<feature type="helix" evidence="37">
    <location>
        <begin position="271"/>
        <end position="286"/>
    </location>
</feature>
<feature type="helix" evidence="37">
    <location>
        <begin position="292"/>
        <end position="297"/>
    </location>
</feature>
<feature type="turn" evidence="37">
    <location>
        <begin position="298"/>
        <end position="300"/>
    </location>
</feature>
<feature type="helix" evidence="37">
    <location>
        <begin position="305"/>
        <end position="313"/>
    </location>
</feature>
<feature type="helix" evidence="37">
    <location>
        <begin position="316"/>
        <end position="340"/>
    </location>
</feature>
<feature type="turn" evidence="37">
    <location>
        <begin position="342"/>
        <end position="346"/>
    </location>
</feature>
<feature type="helix" evidence="37">
    <location>
        <begin position="349"/>
        <end position="367"/>
    </location>
</feature>
<feature type="helix" evidence="37">
    <location>
        <begin position="368"/>
        <end position="371"/>
    </location>
</feature>
<feature type="turn" evidence="37">
    <location>
        <begin position="374"/>
        <end position="377"/>
    </location>
</feature>
<feature type="strand" evidence="37">
    <location>
        <begin position="378"/>
        <end position="381"/>
    </location>
</feature>
<feature type="strand" evidence="37">
    <location>
        <begin position="384"/>
        <end position="386"/>
    </location>
</feature>
<feature type="helix" evidence="37">
    <location>
        <begin position="388"/>
        <end position="394"/>
    </location>
</feature>
<feature type="helix" evidence="37">
    <location>
        <begin position="397"/>
        <end position="411"/>
    </location>
</feature>
<feature type="turn" evidence="38">
    <location>
        <begin position="412"/>
        <end position="414"/>
    </location>
</feature>
<feature type="helix" evidence="37">
    <location>
        <begin position="417"/>
        <end position="428"/>
    </location>
</feature>
<feature type="helix" evidence="37">
    <location>
        <begin position="439"/>
        <end position="460"/>
    </location>
</feature>
<feature type="helix" evidence="37">
    <location>
        <begin position="466"/>
        <end position="494"/>
    </location>
</feature>
<feature type="helix" evidence="37">
    <location>
        <begin position="496"/>
        <end position="502"/>
    </location>
</feature>
<feature type="helix" evidence="37">
    <location>
        <begin position="505"/>
        <end position="510"/>
    </location>
</feature>
<feature type="sequence variant" id="VAR_082877" description="In a colorectal cancer sample, somatic mutation; dbSNP:rs1332895658." evidence="36">
    <original>P</original>
    <variation>S</variation>
    <location sequence="P35398-1">
        <position position="18"/>
    </location>
</feature>
<feature type="sequence conflict" description="In Ref. 2; AAA02963." evidence="35" ref="2">
    <original>A</original>
    <variation>E</variation>
    <location sequence="P35398-4">
        <position position="7"/>
    </location>
</feature>
<gene>
    <name type="primary">RORA</name>
    <name type="synonym">NR1F1</name>
    <name type="synonym">RZRA</name>
</gene>
<keyword id="KW-0002">3D-structure</keyword>
<keyword id="KW-0010">Activator</keyword>
<keyword id="KW-0877">Alternative promoter usage</keyword>
<keyword id="KW-0025">Alternative splicing</keyword>
<keyword id="KW-0090">Biological rhythms</keyword>
<keyword id="KW-0217">Developmental protein</keyword>
<keyword id="KW-0225">Disease variant</keyword>
<keyword id="KW-0238">DNA-binding</keyword>
<keyword id="KW-0887">Epilepsy</keyword>
<keyword id="KW-0991">Intellectual disability</keyword>
<keyword id="KW-1017">Isopeptide bond</keyword>
<keyword id="KW-0479">Metal-binding</keyword>
<keyword id="KW-0488">Methylation</keyword>
<keyword id="KW-0539">Nucleus</keyword>
<keyword id="KW-0597">Phosphoprotein</keyword>
<keyword id="KW-1267">Proteomics identification</keyword>
<keyword id="KW-0675">Receptor</keyword>
<keyword id="KW-1185">Reference proteome</keyword>
<keyword id="KW-0804">Transcription</keyword>
<keyword id="KW-0805">Transcription regulation</keyword>
<keyword id="KW-0832">Ubl conjugation</keyword>
<keyword id="KW-0862">Zinc</keyword>
<keyword id="KW-0863">Zinc-finger</keyword>
<proteinExistence type="evidence at protein level"/>
<comment type="function">
    <text evidence="6 7 8 9 10 11 13 14 15 16 17 18 19 21 22 26 28 29 30">Nuclear receptor that binds DNA as a monomer to ROR response elements (RORE) containing a single core motif half-site 5'-AGGTCA-3' preceded by a short A-T-rich sequence. Key regulator of embryonic development, cellular differentiation, immunity, circadian rhythm as well as lipid, steroid, xenobiotics and glucose metabolism. Considered to have intrinsic transcriptional activity, have some natural ligands like oxysterols that act as agonists (25-hydroxycholesterol) or inverse agonists (7-oxygenated sterols), enhancing or repressing the transcriptional activity, respectively. Recruits distinct combinations of cofactors to target genes regulatory regions to modulate their transcriptional expression, depending on the tissue, time and promoter contexts. Regulates genes involved in photoreceptor development including OPN1SW, OPN1SM and ARR3 and skeletal muscle development with MYOD1. Required for proper cerebellum development (PubMed:29656859). Regulates SHH gene expression, among others, to induce granule cells proliferation as well as expression of genes involved in calcium-mediated signal transduction. Regulates the circadian expression of several clock genes, including CLOCK, BMAL1, NPAS2 and CRY1. Competes with NR1D1 for binding to their shared DNA response element on some clock genes such as BMAL1, CRY1 and NR1D1 itself, resulting in NR1D1-mediated repression or RORA-mediated activation of clock genes expression, leading to the circadian pattern of clock genes expression. Therefore influences the period length and stability of the clock. Regulates genes involved in lipid metabolism such as apolipoproteins APOA1, APOA5, APOC3 and PPARG. In liver, has specific and redundant functions with RORC as positive or negative modulator of expression of genes encoding phase I and phase II proteins involved in the metabolism of lipids, steroids and xenobiotics, such as CYP7B1 and SULT2A1. Induces a rhythmic expression of some of these genes. In addition, interplays functionally with NR1H2 and NR1H3 for the regulation of genes involved in cholesterol metabolism. Also involved in the regulation of hepatic glucose metabolism through the modulation of G6PC1 and PCK1. In adipose tissue, plays a role as negative regulator of adipocyte differentiation, probably acting through dual mechanisms. May suppress CEBPB-dependent adipogenesis through direct interaction and PPARG-dependent adipogenesis through competition for DNA-binding. Downstream of IL6 and TGFB and synergistically with RORC isoform 2, is implicated in the lineage specification of uncommitted CD4(+) T-helper (T(H)) cells into T(H)17 cells, antagonizing the T(H)1 program. Probably regulates IL17 and IL17F expression on T(H) by binding to the essential enhancer conserved non-coding sequence 2 (CNS2) in the IL17-IL17F locus. Involved in hypoxia signaling by interacting with and activating the transcriptional activity of HIF1A. May inhibit cell growth in response to cellular stress. May exert an anti-inflammatory role by inducing CHUK expression and inhibiting NF-kappa-B signaling.</text>
</comment>
<comment type="subunit">
    <text evidence="2 6 10 12 18 19 23 24 28 29 30">Monomer. Interacts (via the DNA-binding domain) with HIF1A; the interaction enhances HIF1A transcription under hypoxia through increasing protein stability. Interacts with CEBPB; the interaction disrupts the interaction CEBPB:EP300. Interacts with the coactivators NCOA2, PPARGC1A (via LXXLL motif), EP300 and MED1. Interacts with the corepressor NCOR1. Interacts with MAGED1 and CTNNB1. Interacts with CRY1 and PER2. Interacts (via AF-2 motif) with PROX1 (By similarity). Interacts with NRIP1. Isoform 4 interacts (via AF-2 motif) with isoform 1 of FOXP3 (via LXXLL motif).</text>
</comment>
<comment type="interaction">
    <interactant intactId="EBI-748689">
        <id>P35398</id>
    </interactant>
    <interactant intactId="EBI-744302">
        <id>P14136</id>
        <label>GFAP</label>
    </interactant>
    <organismsDiffer>false</organismsDiffer>
    <experiments>3</experiments>
</comment>
<comment type="interaction">
    <interactant intactId="EBI-748689">
        <id>P35398</id>
    </interactant>
    <interactant intactId="EBI-946109">
        <id>P51843</id>
        <label>NR0B1</label>
    </interactant>
    <organismsDiffer>false</organismsDiffer>
    <experiments>2</experiments>
</comment>
<comment type="interaction">
    <interactant intactId="EBI-11295807">
        <id>P35398-4</id>
    </interactant>
    <interactant intactId="EBI-983719">
        <id>Q9BZS1</id>
        <label>FOXP3</label>
    </interactant>
    <organismsDiffer>false</organismsDiffer>
    <experiments>5</experiments>
</comment>
<comment type="subcellular location">
    <subcellularLocation>
        <location evidence="3 17 18 19">Nucleus</location>
    </subcellularLocation>
</comment>
<comment type="alternative products">
    <event type="alternative promoter"/>
    <event type="alternative splicing"/>
    <isoform>
        <id>P35398-2</id>
        <name>1</name>
        <name>Alpha-1</name>
        <sequence type="displayed"/>
    </isoform>
    <isoform>
        <id>P35398-1</id>
        <name>2</name>
        <name>Alpha-2</name>
        <sequence type="described" ref="VSP_053973"/>
    </isoform>
    <isoform>
        <id>P35398-3</id>
        <name>3</name>
        <name>Alpha-3</name>
        <sequence type="described" ref="VSP_053975"/>
    </isoform>
    <isoform>
        <id>P35398-4</id>
        <name>4</name>
        <name>Alpha-4</name>
        <sequence type="described" ref="VSP_053974"/>
    </isoform>
</comment>
<comment type="tissue specificity">
    <text evidence="18 26 27">Widely expressed in a number of tissues. Expressed in both regulatory T-cells (Treg) and effector T-cells (Teff) (PubMed:18354202, PubMed:7916608). Isoform 4: Highly expressed in the central nervous system, including in the cerebellum (PubMed:29656859).</text>
</comment>
<comment type="induction">
    <text evidence="15 19">Induced by oxidative stress and DNA damage. Isoform 4 is induced by hypoxia (through transactivation by HIF1A and SP1), but not isoform 1.</text>
</comment>
<comment type="domain">
    <text evidence="1">The AF-2 (activation function-2) motif is required for recruiting coregulators containing LXXLL motifs.</text>
</comment>
<comment type="PTM">
    <text evidence="16 17">Phosphorylation by conventional PKCs in neurons inhibits transcriptional activity. Phosphorylated on Thr-183 by MAPK1/ERK1 in vitro.</text>
</comment>
<comment type="PTM">
    <text evidence="20">Sumoylated by SENP1 and SENP2. Sumoylation, promoted by PIAS2, PIAS3, PIAS4 but not PIAS1, enhances the transcriptional activity. Desumoylated by SENP1.</text>
</comment>
<comment type="PTM">
    <text evidence="11">Ubiquitinated, leading to its degradation by the proteasome. Proteasomal degradation is required for efficient transcriptional activity and is prevented by HR.</text>
</comment>
<comment type="PTM">
    <molecule>Isoform 1</molecule>
    <text evidence="11">Monomethylated at Lys-38 by EZH2, this creates a degron recognized by a DCX (DDB1-DCAF1/VPRBP-CUL4A-RBX1) E3 ubiquitin ligase complex.</text>
</comment>
<comment type="disease" evidence="26">
    <disease id="DI-05291">
        <name>Intellectual developmental disorder with or without epilepsy or cerebellar ataxia</name>
        <acronym>IDDECA</acronym>
        <description>An autosomal dominant neurodevelopmental disorder that manifests with variable features of mild-to-severe intellectual disability, developmental delay, autism spectrum disorder, cerebellar ataxia and epilepsy.</description>
        <dbReference type="MIM" id="618060"/>
    </disease>
    <text>The disease is caused by variants affecting the gene represented in this entry.</text>
</comment>
<comment type="miscellaneous">
    <molecule>Isoform 2</molecule>
    <text evidence="35">Produced by alternative promoter usage. Region from 23 to 71 inhibits DNA-binding and transactivation activity.</text>
</comment>
<comment type="miscellaneous">
    <molecule>Isoform 3</molecule>
    <text evidence="35">Produced by alternative splicing.</text>
</comment>
<comment type="miscellaneous">
    <molecule>Isoform 4</molecule>
    <text evidence="35">Produced by alternative promoter usage.</text>
</comment>
<comment type="similarity">
    <text evidence="35">Belongs to the nuclear hormone receptor family. NR1 subfamily.</text>
</comment>
<dbReference type="EMBL" id="U04897">
    <property type="protein sequence ID" value="AAA62658.1"/>
    <property type="molecule type" value="mRNA"/>
</dbReference>
<dbReference type="EMBL" id="U04898">
    <property type="protein sequence ID" value="AAA62659.1"/>
    <property type="molecule type" value="mRNA"/>
</dbReference>
<dbReference type="EMBL" id="U04899">
    <property type="protein sequence ID" value="AAA62660.1"/>
    <property type="molecule type" value="mRNA"/>
</dbReference>
<dbReference type="EMBL" id="L14611">
    <property type="protein sequence ID" value="AAA02963.1"/>
    <property type="molecule type" value="mRNA"/>
</dbReference>
<dbReference type="EMBL" id="HQ692818">
    <property type="protein sequence ID" value="ADZ17329.1"/>
    <property type="molecule type" value="mRNA"/>
</dbReference>
<dbReference type="EMBL" id="AC009560">
    <property type="status" value="NOT_ANNOTATED_CDS"/>
    <property type="molecule type" value="Genomic_DNA"/>
</dbReference>
<dbReference type="EMBL" id="AC012404">
    <property type="status" value="NOT_ANNOTATED_CDS"/>
    <property type="molecule type" value="Genomic_DNA"/>
</dbReference>
<dbReference type="EMBL" id="AC022898">
    <property type="status" value="NOT_ANNOTATED_CDS"/>
    <property type="molecule type" value="Genomic_DNA"/>
</dbReference>
<dbReference type="EMBL" id="AC079068">
    <property type="status" value="NOT_ANNOTATED_CDS"/>
    <property type="molecule type" value="Genomic_DNA"/>
</dbReference>
<dbReference type="EMBL" id="AC087385">
    <property type="status" value="NOT_ANNOTATED_CDS"/>
    <property type="molecule type" value="Genomic_DNA"/>
</dbReference>
<dbReference type="EMBL" id="AC107241">
    <property type="status" value="NOT_ANNOTATED_CDS"/>
    <property type="molecule type" value="Genomic_DNA"/>
</dbReference>
<dbReference type="EMBL" id="AC107905">
    <property type="status" value="NOT_ANNOTATED_CDS"/>
    <property type="molecule type" value="Genomic_DNA"/>
</dbReference>
<dbReference type="EMBL" id="CH471082">
    <property type="protein sequence ID" value="EAW77594.1"/>
    <property type="molecule type" value="Genomic_DNA"/>
</dbReference>
<dbReference type="EMBL" id="BC008831">
    <property type="protein sequence ID" value="AAH08831.1"/>
    <property type="molecule type" value="mRNA"/>
</dbReference>
<dbReference type="EMBL" id="BC100987">
    <property type="protein sequence ID" value="AAI00988.1"/>
    <property type="molecule type" value="mRNA"/>
</dbReference>
<dbReference type="EMBL" id="BC100988">
    <property type="protein sequence ID" value="AAI00989.1"/>
    <property type="molecule type" value="mRNA"/>
</dbReference>
<dbReference type="EMBL" id="BC100989">
    <property type="protein sequence ID" value="AAI00990.1"/>
    <property type="molecule type" value="mRNA"/>
</dbReference>
<dbReference type="EMBL" id="BC100990">
    <property type="protein sequence ID" value="AAI00991.1"/>
    <property type="molecule type" value="mRNA"/>
</dbReference>
<dbReference type="CCDS" id="CCDS10177.1">
    <molecule id="P35398-2"/>
</dbReference>
<dbReference type="CCDS" id="CCDS10179.1">
    <molecule id="P35398-1"/>
</dbReference>
<dbReference type="CCDS" id="CCDS45271.1">
    <molecule id="P35398-4"/>
</dbReference>
<dbReference type="PIR" id="A53196">
    <property type="entry name" value="A53196"/>
</dbReference>
<dbReference type="PIR" id="A56856">
    <property type="entry name" value="A56856"/>
</dbReference>
<dbReference type="PIR" id="B53196">
    <property type="entry name" value="B53196"/>
</dbReference>
<dbReference type="PIR" id="C53196">
    <property type="entry name" value="C53196"/>
</dbReference>
<dbReference type="RefSeq" id="NP_002934.1">
    <property type="nucleotide sequence ID" value="NM_002943.3"/>
</dbReference>
<dbReference type="RefSeq" id="NP_599022.1">
    <molecule id="P35398-1"/>
    <property type="nucleotide sequence ID" value="NM_134260.3"/>
</dbReference>
<dbReference type="RefSeq" id="NP_599023.1">
    <molecule id="P35398-2"/>
    <property type="nucleotide sequence ID" value="NM_134261.3"/>
</dbReference>
<dbReference type="RefSeq" id="NP_599024.1">
    <property type="nucleotide sequence ID" value="NM_134262.2"/>
</dbReference>
<dbReference type="PDB" id="1N83">
    <property type="method" value="X-ray"/>
    <property type="resolution" value="1.63 A"/>
    <property type="chains" value="A=271-523"/>
</dbReference>
<dbReference type="PDB" id="1S0X">
    <property type="method" value="X-ray"/>
    <property type="resolution" value="2.20 A"/>
    <property type="chains" value="A=271-523"/>
</dbReference>
<dbReference type="PDB" id="4S15">
    <property type="method" value="X-ray"/>
    <property type="resolution" value="1.90 A"/>
    <property type="chains" value="A/B=269-523"/>
</dbReference>
<dbReference type="PDBsum" id="1N83"/>
<dbReference type="PDBsum" id="1S0X"/>
<dbReference type="PDBsum" id="4S15"/>
<dbReference type="SMR" id="P35398"/>
<dbReference type="BioGRID" id="112022">
    <property type="interactions" value="34"/>
</dbReference>
<dbReference type="DIP" id="DIP-29938N"/>
<dbReference type="FunCoup" id="P35398">
    <property type="interactions" value="2048"/>
</dbReference>
<dbReference type="IntAct" id="P35398">
    <property type="interactions" value="9"/>
</dbReference>
<dbReference type="STRING" id="9606.ENSP00000261523"/>
<dbReference type="BindingDB" id="P35398"/>
<dbReference type="ChEMBL" id="CHEMBL5868"/>
<dbReference type="DrugBank" id="DB04540">
    <property type="generic name" value="Cholesterol"/>
</dbReference>
<dbReference type="DrugBank" id="DB01990">
    <property type="generic name" value="Cholesterol sulfate"/>
</dbReference>
<dbReference type="DrugCentral" id="P35398"/>
<dbReference type="GuidetoPHARMACOLOGY" id="598"/>
<dbReference type="GlyGen" id="P35398">
    <property type="glycosylation" value="2 sites, 1 O-linked glycan (2 sites)"/>
</dbReference>
<dbReference type="iPTMnet" id="P35398"/>
<dbReference type="PhosphoSitePlus" id="P35398"/>
<dbReference type="BioMuta" id="RORA"/>
<dbReference type="DMDM" id="548814"/>
<dbReference type="jPOST" id="P35398"/>
<dbReference type="MassIVE" id="P35398"/>
<dbReference type="PaxDb" id="9606-ENSP00000261523"/>
<dbReference type="PeptideAtlas" id="P35398"/>
<dbReference type="ProteomicsDB" id="55055">
    <molecule id="P35398-2"/>
</dbReference>
<dbReference type="ProteomicsDB" id="55056">
    <molecule id="P35398-2"/>
</dbReference>
<dbReference type="ProteomicsDB" id="55057">
    <molecule id="P35398-3"/>
</dbReference>
<dbReference type="ProteomicsDB" id="55058">
    <molecule id="P35398-4"/>
</dbReference>
<dbReference type="Antibodypedia" id="4080">
    <property type="antibodies" value="562 antibodies from 38 providers"/>
</dbReference>
<dbReference type="DNASU" id="6095"/>
<dbReference type="Ensembl" id="ENST00000261523.9">
    <molecule id="P35398-1"/>
    <property type="protein sequence ID" value="ENSP00000261523.5"/>
    <property type="gene ID" value="ENSG00000069667.16"/>
</dbReference>
<dbReference type="Ensembl" id="ENST00000335670.11">
    <molecule id="P35398-2"/>
    <property type="protein sequence ID" value="ENSP00000335087.6"/>
    <property type="gene ID" value="ENSG00000069667.16"/>
</dbReference>
<dbReference type="GeneID" id="6095"/>
<dbReference type="KEGG" id="hsa:6095"/>
<dbReference type="MANE-Select" id="ENST00000335670.11">
    <property type="protein sequence ID" value="ENSP00000335087.6"/>
    <property type="RefSeq nucleotide sequence ID" value="NM_134261.3"/>
    <property type="RefSeq protein sequence ID" value="NP_599023.1"/>
</dbReference>
<dbReference type="UCSC" id="uc002agt.5">
    <molecule id="P35398-2"/>
    <property type="organism name" value="human"/>
</dbReference>
<dbReference type="AGR" id="HGNC:10258"/>
<dbReference type="CTD" id="6095"/>
<dbReference type="DisGeNET" id="6095"/>
<dbReference type="GeneCards" id="RORA"/>
<dbReference type="HGNC" id="HGNC:10258">
    <property type="gene designation" value="RORA"/>
</dbReference>
<dbReference type="HPA" id="ENSG00000069667">
    <property type="expression patterns" value="Tissue enhanced (skin)"/>
</dbReference>
<dbReference type="MalaCards" id="RORA"/>
<dbReference type="MIM" id="600825">
    <property type="type" value="gene"/>
</dbReference>
<dbReference type="MIM" id="618060">
    <property type="type" value="phenotype"/>
</dbReference>
<dbReference type="neXtProt" id="NX_P35398"/>
<dbReference type="OpenTargets" id="ENSG00000069667"/>
<dbReference type="Orphanet" id="528084">
    <property type="disease" value="Non-specific syndromic intellectual disability"/>
</dbReference>
<dbReference type="PharmGKB" id="PA34630"/>
<dbReference type="VEuPathDB" id="HostDB:ENSG00000069667"/>
<dbReference type="eggNOG" id="KOG4216">
    <property type="taxonomic scope" value="Eukaryota"/>
</dbReference>
<dbReference type="GeneTree" id="ENSGT00940000157387"/>
<dbReference type="InParanoid" id="P35398"/>
<dbReference type="OMA" id="VSMAELX"/>
<dbReference type="OrthoDB" id="8832025at2759"/>
<dbReference type="PAN-GO" id="P35398">
    <property type="GO annotations" value="6 GO annotations based on evolutionary models"/>
</dbReference>
<dbReference type="TreeFam" id="TF319910"/>
<dbReference type="PathwayCommons" id="P35398"/>
<dbReference type="Reactome" id="R-HSA-1368082">
    <property type="pathway name" value="RORA activates gene expression"/>
</dbReference>
<dbReference type="Reactome" id="R-HSA-1989781">
    <property type="pathway name" value="PPARA activates gene expression"/>
</dbReference>
<dbReference type="Reactome" id="R-HSA-383280">
    <property type="pathway name" value="Nuclear Receptor transcription pathway"/>
</dbReference>
<dbReference type="Reactome" id="R-HSA-400253">
    <property type="pathway name" value="Circadian Clock"/>
</dbReference>
<dbReference type="Reactome" id="R-HSA-4090294">
    <property type="pathway name" value="SUMOylation of intracellular receptors"/>
</dbReference>
<dbReference type="Reactome" id="R-HSA-6785807">
    <property type="pathway name" value="Interleukin-4 and Interleukin-13 signaling"/>
</dbReference>
<dbReference type="Reactome" id="R-HSA-9707616">
    <property type="pathway name" value="Heme signaling"/>
</dbReference>
<dbReference type="SignaLink" id="P35398"/>
<dbReference type="SIGNOR" id="P35398"/>
<dbReference type="BioGRID-ORCS" id="6095">
    <property type="hits" value="9 hits in 1177 CRISPR screens"/>
</dbReference>
<dbReference type="ChiTaRS" id="RORA">
    <property type="organism name" value="human"/>
</dbReference>
<dbReference type="EvolutionaryTrace" id="P35398"/>
<dbReference type="GeneWiki" id="RAR-related_orphan_receptor_alpha"/>
<dbReference type="GenomeRNAi" id="6095"/>
<dbReference type="Pharos" id="P35398">
    <property type="development level" value="Tchem"/>
</dbReference>
<dbReference type="PRO" id="PR:P35398"/>
<dbReference type="Proteomes" id="UP000005640">
    <property type="component" value="Chromosome 15"/>
</dbReference>
<dbReference type="RNAct" id="P35398">
    <property type="molecule type" value="protein"/>
</dbReference>
<dbReference type="Bgee" id="ENSG00000069667">
    <property type="expression patterns" value="Expressed in upper leg skin and 199 other cell types or tissues"/>
</dbReference>
<dbReference type="ExpressionAtlas" id="P35398">
    <property type="expression patterns" value="baseline and differential"/>
</dbReference>
<dbReference type="GO" id="GO:0000785">
    <property type="term" value="C:chromatin"/>
    <property type="evidence" value="ECO:0000247"/>
    <property type="project" value="NTNU_SB"/>
</dbReference>
<dbReference type="GO" id="GO:0005730">
    <property type="term" value="C:nucleolus"/>
    <property type="evidence" value="ECO:0000314"/>
    <property type="project" value="HPA"/>
</dbReference>
<dbReference type="GO" id="GO:0005654">
    <property type="term" value="C:nucleoplasm"/>
    <property type="evidence" value="ECO:0000304"/>
    <property type="project" value="Reactome"/>
</dbReference>
<dbReference type="GO" id="GO:0005634">
    <property type="term" value="C:nucleus"/>
    <property type="evidence" value="ECO:0000314"/>
    <property type="project" value="UniProtKB"/>
</dbReference>
<dbReference type="GO" id="GO:0008013">
    <property type="term" value="F:beta-catenin binding"/>
    <property type="evidence" value="ECO:0007669"/>
    <property type="project" value="Ensembl"/>
</dbReference>
<dbReference type="GO" id="GO:0003677">
    <property type="term" value="F:DNA binding"/>
    <property type="evidence" value="ECO:0000314"/>
    <property type="project" value="UniProtKB"/>
</dbReference>
<dbReference type="GO" id="GO:0003700">
    <property type="term" value="F:DNA-binding transcription factor activity"/>
    <property type="evidence" value="ECO:0000314"/>
    <property type="project" value="UniProtKB"/>
</dbReference>
<dbReference type="GO" id="GO:0000981">
    <property type="term" value="F:DNA-binding transcription factor activity, RNA polymerase II-specific"/>
    <property type="evidence" value="ECO:0000247"/>
    <property type="project" value="NTNU_SB"/>
</dbReference>
<dbReference type="GO" id="GO:0098531">
    <property type="term" value="F:ligand-modulated transcription factor activity"/>
    <property type="evidence" value="ECO:0000314"/>
    <property type="project" value="UniProtKB"/>
</dbReference>
<dbReference type="GO" id="GO:0004879">
    <property type="term" value="F:nuclear receptor activity"/>
    <property type="evidence" value="ECO:0000318"/>
    <property type="project" value="GO_Central"/>
</dbReference>
<dbReference type="GO" id="GO:0008142">
    <property type="term" value="F:oxysterol binding"/>
    <property type="evidence" value="ECO:0000314"/>
    <property type="project" value="UniProtKB"/>
</dbReference>
<dbReference type="GO" id="GO:0000978">
    <property type="term" value="F:RNA polymerase II cis-regulatory region sequence-specific DNA binding"/>
    <property type="evidence" value="ECO:0000314"/>
    <property type="project" value="UniProtKB"/>
</dbReference>
<dbReference type="GO" id="GO:0000977">
    <property type="term" value="F:RNA polymerase II transcription regulatory region sequence-specific DNA binding"/>
    <property type="evidence" value="ECO:0000314"/>
    <property type="project" value="MGI"/>
</dbReference>
<dbReference type="GO" id="GO:0043565">
    <property type="term" value="F:sequence-specific DNA binding"/>
    <property type="evidence" value="ECO:0000314"/>
    <property type="project" value="UniProtKB"/>
</dbReference>
<dbReference type="GO" id="GO:0001223">
    <property type="term" value="F:transcription coactivator binding"/>
    <property type="evidence" value="ECO:0000353"/>
    <property type="project" value="UniProtKB"/>
</dbReference>
<dbReference type="GO" id="GO:0001221">
    <property type="term" value="F:transcription coregulator binding"/>
    <property type="evidence" value="ECO:0000353"/>
    <property type="project" value="UniProtKB"/>
</dbReference>
<dbReference type="GO" id="GO:0001222">
    <property type="term" value="F:transcription corepressor binding"/>
    <property type="evidence" value="ECO:0000353"/>
    <property type="project" value="UniProtKB"/>
</dbReference>
<dbReference type="GO" id="GO:0008270">
    <property type="term" value="F:zinc ion binding"/>
    <property type="evidence" value="ECO:0007669"/>
    <property type="project" value="UniProtKB-KW"/>
</dbReference>
<dbReference type="GO" id="GO:0001525">
    <property type="term" value="P:angiogenesis"/>
    <property type="evidence" value="ECO:0000315"/>
    <property type="project" value="UniProtKB"/>
</dbReference>
<dbReference type="GO" id="GO:0071456">
    <property type="term" value="P:cellular response to hypoxia"/>
    <property type="evidence" value="ECO:0000315"/>
    <property type="project" value="UniProtKB"/>
</dbReference>
<dbReference type="GO" id="GO:0071347">
    <property type="term" value="P:cellular response to interleukin-1"/>
    <property type="evidence" value="ECO:0007669"/>
    <property type="project" value="Ensembl"/>
</dbReference>
<dbReference type="GO" id="GO:0036315">
    <property type="term" value="P:cellular response to sterol"/>
    <property type="evidence" value="ECO:0000314"/>
    <property type="project" value="UniProtKB"/>
</dbReference>
<dbReference type="GO" id="GO:0071356">
    <property type="term" value="P:cellular response to tumor necrosis factor"/>
    <property type="evidence" value="ECO:0007669"/>
    <property type="project" value="Ensembl"/>
</dbReference>
<dbReference type="GO" id="GO:0021930">
    <property type="term" value="P:cerebellar granule cell precursor proliferation"/>
    <property type="evidence" value="ECO:0000250"/>
    <property type="project" value="UniProtKB"/>
</dbReference>
<dbReference type="GO" id="GO:0021702">
    <property type="term" value="P:cerebellar Purkinje cell differentiation"/>
    <property type="evidence" value="ECO:0007669"/>
    <property type="project" value="Ensembl"/>
</dbReference>
<dbReference type="GO" id="GO:0046068">
    <property type="term" value="P:cGMP metabolic process"/>
    <property type="evidence" value="ECO:0007669"/>
    <property type="project" value="Ensembl"/>
</dbReference>
<dbReference type="GO" id="GO:0042632">
    <property type="term" value="P:cholesterol homeostasis"/>
    <property type="evidence" value="ECO:0000250"/>
    <property type="project" value="UniProtKB"/>
</dbReference>
<dbReference type="GO" id="GO:0032922">
    <property type="term" value="P:circadian regulation of gene expression"/>
    <property type="evidence" value="ECO:0000250"/>
    <property type="project" value="UniProtKB"/>
</dbReference>
<dbReference type="GO" id="GO:0030522">
    <property type="term" value="P:intracellular receptor signaling pathway"/>
    <property type="evidence" value="ECO:0000314"/>
    <property type="project" value="UniProtKB"/>
</dbReference>
<dbReference type="GO" id="GO:0042692">
    <property type="term" value="P:muscle cell differentiation"/>
    <property type="evidence" value="ECO:0000315"/>
    <property type="project" value="UniProtKB"/>
</dbReference>
<dbReference type="GO" id="GO:0043124">
    <property type="term" value="P:negative regulation of canonical NF-kappaB signal transduction"/>
    <property type="evidence" value="ECO:0000315"/>
    <property type="project" value="UniProtKB"/>
</dbReference>
<dbReference type="GO" id="GO:0045599">
    <property type="term" value="P:negative regulation of fat cell differentiation"/>
    <property type="evidence" value="ECO:0000250"/>
    <property type="project" value="UniProtKB"/>
</dbReference>
<dbReference type="GO" id="GO:0050728">
    <property type="term" value="P:negative regulation of inflammatory response"/>
    <property type="evidence" value="ECO:0000315"/>
    <property type="project" value="UniProtKB"/>
</dbReference>
<dbReference type="GO" id="GO:0006809">
    <property type="term" value="P:nitric oxide biosynthetic process"/>
    <property type="evidence" value="ECO:0007669"/>
    <property type="project" value="Ensembl"/>
</dbReference>
<dbReference type="GO" id="GO:0042753">
    <property type="term" value="P:positive regulation of circadian rhythm"/>
    <property type="evidence" value="ECO:0000250"/>
    <property type="project" value="UniProtKB"/>
</dbReference>
<dbReference type="GO" id="GO:0045893">
    <property type="term" value="P:positive regulation of DNA-templated transcription"/>
    <property type="evidence" value="ECO:0000314"/>
    <property type="project" value="UniProtKB"/>
</dbReference>
<dbReference type="GO" id="GO:0045944">
    <property type="term" value="P:positive regulation of transcription by RNA polymerase II"/>
    <property type="evidence" value="ECO:0000314"/>
    <property type="project" value="MGI"/>
</dbReference>
<dbReference type="GO" id="GO:0010575">
    <property type="term" value="P:positive regulation of vascular endothelial growth factor production"/>
    <property type="evidence" value="ECO:0000315"/>
    <property type="project" value="UniProtKB"/>
</dbReference>
<dbReference type="GO" id="GO:0006355">
    <property type="term" value="P:regulation of DNA-templated transcription"/>
    <property type="evidence" value="ECO:0000314"/>
    <property type="project" value="UniProtKB"/>
</dbReference>
<dbReference type="GO" id="GO:0010906">
    <property type="term" value="P:regulation of glucose metabolic process"/>
    <property type="evidence" value="ECO:0000250"/>
    <property type="project" value="UniProtKB"/>
</dbReference>
<dbReference type="GO" id="GO:0043030">
    <property type="term" value="P:regulation of macrophage activation"/>
    <property type="evidence" value="ECO:0007669"/>
    <property type="project" value="Ensembl"/>
</dbReference>
<dbReference type="GO" id="GO:0008589">
    <property type="term" value="P:regulation of smoothened signaling pathway"/>
    <property type="evidence" value="ECO:0000250"/>
    <property type="project" value="UniProtKB"/>
</dbReference>
<dbReference type="GO" id="GO:0019218">
    <property type="term" value="P:regulation of steroid metabolic process"/>
    <property type="evidence" value="ECO:0000250"/>
    <property type="project" value="UniProtKB"/>
</dbReference>
<dbReference type="GO" id="GO:0006357">
    <property type="term" value="P:regulation of transcription by RNA polymerase II"/>
    <property type="evidence" value="ECO:0000318"/>
    <property type="project" value="GO_Central"/>
</dbReference>
<dbReference type="GO" id="GO:0072539">
    <property type="term" value="P:T-helper 17 cell differentiation"/>
    <property type="evidence" value="ECO:0007669"/>
    <property type="project" value="Ensembl"/>
</dbReference>
<dbReference type="GO" id="GO:0070328">
    <property type="term" value="P:triglyceride homeostasis"/>
    <property type="evidence" value="ECO:0000315"/>
    <property type="project" value="UniProtKB"/>
</dbReference>
<dbReference type="GO" id="GO:0006805">
    <property type="term" value="P:xenobiotic metabolic process"/>
    <property type="evidence" value="ECO:0000250"/>
    <property type="project" value="UniProtKB"/>
</dbReference>
<dbReference type="CDD" id="cd06968">
    <property type="entry name" value="NR_DBD_ROR"/>
    <property type="match status" value="1"/>
</dbReference>
<dbReference type="CDD" id="cd06939">
    <property type="entry name" value="NR_LBD_ROR_like"/>
    <property type="match status" value="1"/>
</dbReference>
<dbReference type="FunFam" id="1.10.565.10:FF:000005">
    <property type="entry name" value="Nuclear orphan receptor ROR-beta"/>
    <property type="match status" value="1"/>
</dbReference>
<dbReference type="FunFam" id="3.30.50.10:FF:000003">
    <property type="entry name" value="Nuclear orphan receptor ROR-beta"/>
    <property type="match status" value="1"/>
</dbReference>
<dbReference type="Gene3D" id="3.30.50.10">
    <property type="entry name" value="Erythroid Transcription Factor GATA-1, subunit A"/>
    <property type="match status" value="1"/>
</dbReference>
<dbReference type="Gene3D" id="1.10.565.10">
    <property type="entry name" value="Retinoid X Receptor"/>
    <property type="match status" value="1"/>
</dbReference>
<dbReference type="IDEAL" id="IID00550"/>
<dbReference type="InterPro" id="IPR035500">
    <property type="entry name" value="NHR-like_dom_sf"/>
</dbReference>
<dbReference type="InterPro" id="IPR044101">
    <property type="entry name" value="NR_DBD_ROR"/>
</dbReference>
<dbReference type="InterPro" id="IPR000536">
    <property type="entry name" value="Nucl_hrmn_rcpt_lig-bd"/>
</dbReference>
<dbReference type="InterPro" id="IPR001723">
    <property type="entry name" value="Nuclear_hrmn_rcpt"/>
</dbReference>
<dbReference type="InterPro" id="IPR003079">
    <property type="entry name" value="ROR_rcpt"/>
</dbReference>
<dbReference type="InterPro" id="IPR001628">
    <property type="entry name" value="Znf_hrmn_rcpt"/>
</dbReference>
<dbReference type="InterPro" id="IPR013088">
    <property type="entry name" value="Znf_NHR/GATA"/>
</dbReference>
<dbReference type="PANTHER" id="PTHR45805">
    <property type="entry name" value="NUCLEAR HORMONE RECEPTOR HR3-RELATED"/>
    <property type="match status" value="1"/>
</dbReference>
<dbReference type="PANTHER" id="PTHR45805:SF3">
    <property type="entry name" value="NUCLEAR RECEPTOR ROR-ALPHA"/>
    <property type="match status" value="1"/>
</dbReference>
<dbReference type="Pfam" id="PF00104">
    <property type="entry name" value="Hormone_recep"/>
    <property type="match status" value="1"/>
</dbReference>
<dbReference type="Pfam" id="PF00105">
    <property type="entry name" value="zf-C4"/>
    <property type="match status" value="1"/>
</dbReference>
<dbReference type="PRINTS" id="PR01293">
    <property type="entry name" value="RORNUCRECPTR"/>
</dbReference>
<dbReference type="PRINTS" id="PR00398">
    <property type="entry name" value="STRDHORMONER"/>
</dbReference>
<dbReference type="PRINTS" id="PR00047">
    <property type="entry name" value="STROIDFINGER"/>
</dbReference>
<dbReference type="SMART" id="SM00430">
    <property type="entry name" value="HOLI"/>
    <property type="match status" value="1"/>
</dbReference>
<dbReference type="SMART" id="SM00399">
    <property type="entry name" value="ZnF_C4"/>
    <property type="match status" value="1"/>
</dbReference>
<dbReference type="SUPFAM" id="SSF57716">
    <property type="entry name" value="Glucocorticoid receptor-like (DNA-binding domain)"/>
    <property type="match status" value="1"/>
</dbReference>
<dbReference type="SUPFAM" id="SSF48508">
    <property type="entry name" value="Nuclear receptor ligand-binding domain"/>
    <property type="match status" value="1"/>
</dbReference>
<dbReference type="PROSITE" id="PS51843">
    <property type="entry name" value="NR_LBD"/>
    <property type="match status" value="1"/>
</dbReference>
<dbReference type="PROSITE" id="PS00031">
    <property type="entry name" value="NUCLEAR_REC_DBD_1"/>
    <property type="match status" value="1"/>
</dbReference>
<dbReference type="PROSITE" id="PS51030">
    <property type="entry name" value="NUCLEAR_REC_DBD_2"/>
    <property type="match status" value="1"/>
</dbReference>
<reference key="1">
    <citation type="journal article" date="1994" name="Genes Dev.">
        <title>Isoform-specific amino-terminal domains dictate DNA-binding properties of ROR alpha, a novel family of orphan hormone nuclear receptors.</title>
        <authorList>
            <person name="Giguere V."/>
            <person name="Tini M."/>
            <person name="Flock G."/>
            <person name="Ong E."/>
            <person name="Evans R.M."/>
            <person name="Otulakowski G."/>
        </authorList>
    </citation>
    <scope>NUCLEOTIDE SEQUENCE [MRNA] (ISOFORMS 1; 2 AND 3)</scope>
    <scope>FUNCTION AS TRANSCRIPTION ACTIVATOR</scope>
    <scope>DNA-BINDING</scope>
    <scope>SUBUNIT</scope>
    <source>
        <tissue>Retina</tissue>
        <tissue>Testis</tissue>
    </source>
</reference>
<reference key="2">
    <citation type="journal article" date="1993" name="Biochem. Biophys. Res. Commun.">
        <title>Identification of nuclear receptor mRNAs by RT-PCR amplification of conserved zinc-finger motif sequences.</title>
        <authorList>
            <person name="Becker-Andre M."/>
            <person name="Andre E."/>
            <person name="Delamarter J.F."/>
        </authorList>
    </citation>
    <scope>NUCLEOTIDE SEQUENCE [MRNA] (ISOFORM 4)</scope>
    <scope>TISSUE SPECIFICITY</scope>
    <source>
        <tissue>Umbilical vein endothelial cell</tissue>
    </source>
</reference>
<reference key="3">
    <citation type="submission" date="2010-12" db="EMBL/GenBank/DDBJ databases">
        <title>Isolation of cDNA coding for multiple human nuclear receptor clones.</title>
        <authorList>
            <person name="Kaighin V.A."/>
            <person name="Martin A.L."/>
            <person name="Aronstam R.S."/>
        </authorList>
    </citation>
    <scope>NUCLEOTIDE SEQUENCE [MRNA] (ISOFORM 4)</scope>
    <source>
        <tissue>Kidney</tissue>
    </source>
</reference>
<reference key="4">
    <citation type="journal article" date="2006" name="Nature">
        <title>Analysis of the DNA sequence and duplication history of human chromosome 15.</title>
        <authorList>
            <person name="Zody M.C."/>
            <person name="Garber M."/>
            <person name="Sharpe T."/>
            <person name="Young S.K."/>
            <person name="Rowen L."/>
            <person name="O'Neill K."/>
            <person name="Whittaker C.A."/>
            <person name="Kamal M."/>
            <person name="Chang J.L."/>
            <person name="Cuomo C.A."/>
            <person name="Dewar K."/>
            <person name="FitzGerald M.G."/>
            <person name="Kodira C.D."/>
            <person name="Madan A."/>
            <person name="Qin S."/>
            <person name="Yang X."/>
            <person name="Abbasi N."/>
            <person name="Abouelleil A."/>
            <person name="Arachchi H.M."/>
            <person name="Baradarani L."/>
            <person name="Birditt B."/>
            <person name="Bloom S."/>
            <person name="Bloom T."/>
            <person name="Borowsky M.L."/>
            <person name="Burke J."/>
            <person name="Butler J."/>
            <person name="Cook A."/>
            <person name="DeArellano K."/>
            <person name="DeCaprio D."/>
            <person name="Dorris L. III"/>
            <person name="Dors M."/>
            <person name="Eichler E.E."/>
            <person name="Engels R."/>
            <person name="Fahey J."/>
            <person name="Fleetwood P."/>
            <person name="Friedman C."/>
            <person name="Gearin G."/>
            <person name="Hall J.L."/>
            <person name="Hensley G."/>
            <person name="Johnson E."/>
            <person name="Jones C."/>
            <person name="Kamat A."/>
            <person name="Kaur A."/>
            <person name="Locke D.P."/>
            <person name="Madan A."/>
            <person name="Munson G."/>
            <person name="Jaffe D.B."/>
            <person name="Lui A."/>
            <person name="Macdonald P."/>
            <person name="Mauceli E."/>
            <person name="Naylor J.W."/>
            <person name="Nesbitt R."/>
            <person name="Nicol R."/>
            <person name="O'Leary S.B."/>
            <person name="Ratcliffe A."/>
            <person name="Rounsley S."/>
            <person name="She X."/>
            <person name="Sneddon K.M.B."/>
            <person name="Stewart S."/>
            <person name="Sougnez C."/>
            <person name="Stone S.M."/>
            <person name="Topham K."/>
            <person name="Vincent D."/>
            <person name="Wang S."/>
            <person name="Zimmer A.R."/>
            <person name="Birren B.W."/>
            <person name="Hood L."/>
            <person name="Lander E.S."/>
            <person name="Nusbaum C."/>
        </authorList>
    </citation>
    <scope>NUCLEOTIDE SEQUENCE [LARGE SCALE GENOMIC DNA]</scope>
</reference>
<reference key="5">
    <citation type="submission" date="2005-07" db="EMBL/GenBank/DDBJ databases">
        <authorList>
            <person name="Mural R.J."/>
            <person name="Istrail S."/>
            <person name="Sutton G."/>
            <person name="Florea L."/>
            <person name="Halpern A.L."/>
            <person name="Mobarry C.M."/>
            <person name="Lippert R."/>
            <person name="Walenz B."/>
            <person name="Shatkay H."/>
            <person name="Dew I."/>
            <person name="Miller J.R."/>
            <person name="Flanigan M.J."/>
            <person name="Edwards N.J."/>
            <person name="Bolanos R."/>
            <person name="Fasulo D."/>
            <person name="Halldorsson B.V."/>
            <person name="Hannenhalli S."/>
            <person name="Turner R."/>
            <person name="Yooseph S."/>
            <person name="Lu F."/>
            <person name="Nusskern D.R."/>
            <person name="Shue B.C."/>
            <person name="Zheng X.H."/>
            <person name="Zhong F."/>
            <person name="Delcher A.L."/>
            <person name="Huson D.H."/>
            <person name="Kravitz S.A."/>
            <person name="Mouchard L."/>
            <person name="Reinert K."/>
            <person name="Remington K.A."/>
            <person name="Clark A.G."/>
            <person name="Waterman M.S."/>
            <person name="Eichler E.E."/>
            <person name="Adams M.D."/>
            <person name="Hunkapiller M.W."/>
            <person name="Myers E.W."/>
            <person name="Venter J.C."/>
        </authorList>
    </citation>
    <scope>NUCLEOTIDE SEQUENCE [LARGE SCALE GENOMIC DNA]</scope>
</reference>
<reference key="6">
    <citation type="journal article" date="2004" name="Genome Res.">
        <title>The status, quality, and expansion of the NIH full-length cDNA project: the Mammalian Gene Collection (MGC).</title>
        <authorList>
            <consortium name="The MGC Project Team"/>
        </authorList>
    </citation>
    <scope>NUCLEOTIDE SEQUENCE [LARGE SCALE MRNA] (ISOFORMS 1 AND 4)</scope>
    <source>
        <tissue>Muscle</tissue>
    </source>
</reference>
<reference key="7">
    <citation type="journal article" date="1997" name="Mol. Endocrinol.">
        <title>Transcriptional activation and repression by RORalpha, an orphan nuclear receptor required for cerebellar development.</title>
        <authorList>
            <person name="Harding H.P."/>
            <person name="Atkins G.B."/>
            <person name="Jaffe A.B."/>
            <person name="Seo W.J."/>
            <person name="Lazar M.A."/>
        </authorList>
    </citation>
    <scope>FUNCTION AS TRANSCRIPTION ACTIVATOR</scope>
    <scope>INTERACTION WITH NCOR1</scope>
    <scope>DNA-BINDING</scope>
    <scope>SUBUNIT</scope>
</reference>
<reference key="8">
    <citation type="journal article" date="1999" name="Mol. Endocrinol.">
        <title>Coactivators for the orphan nuclear receptor RORalpha.</title>
        <authorList>
            <person name="Atkins G.B."/>
            <person name="Hu X."/>
            <person name="Guenther M.G."/>
            <person name="Rachez C."/>
            <person name="Freedman L.P."/>
            <person name="Lazar M.A."/>
        </authorList>
    </citation>
    <scope>FUNCTION AS TRANSCRIPTION ACTIVATOR</scope>
    <scope>INTERACTION WITH MED1 AND NCOA2</scope>
    <scope>MUTAGENESIS OF VAL-335 AND 510-LEU-PHE-511</scope>
</reference>
<reference key="9">
    <citation type="journal article" date="1999" name="Nucleic Acids Res.">
        <title>Exogenous expression of a dominant negative RORalpha1 vector in muscle cells impairs differentiation: RORalpha1 directly interacts with p300 and myoD.</title>
        <authorList>
            <person name="Lau P."/>
            <person name="Bailey P."/>
            <person name="Dowhan D.H."/>
            <person name="Muscat G.E."/>
        </authorList>
    </citation>
    <scope>FUNCTION IN MYOGENESIS</scope>
    <scope>INTERACTION WITH EP300</scope>
</reference>
<reference key="10">
    <citation type="journal article" date="2001" name="Biochem. Biophys. Res. Commun.">
        <title>Identification of a novel peroxisome proliferator-activated receptor (PPAR) gamma promoter in man and transactivation by the nuclear receptor RORalpha1.</title>
        <authorList>
            <person name="Sundvold H."/>
            <person name="Lien S."/>
        </authorList>
    </citation>
    <scope>FUNCTION AS TRANSCRIPTION ACTIVATOR</scope>
    <scope>DNA-BINDING</scope>
</reference>
<reference key="11">
    <citation type="journal article" date="2001" name="EMBO Rep.">
        <title>The orphan nuclear receptor ROR alpha is a negative regulator of the inflammatory response.</title>
        <authorList>
            <person name="Delerive P."/>
            <person name="Monte D."/>
            <person name="Dubois G."/>
            <person name="Trottein F."/>
            <person name="Fruchart-Najib J."/>
            <person name="Mariani J."/>
            <person name="Fruchart J.C."/>
            <person name="Staels B."/>
        </authorList>
    </citation>
    <scope>FUNCTION IN INFLAMMATION</scope>
</reference>
<reference key="12">
    <citation type="journal article" date="2001" name="J. Biol. Chem.">
        <title>Transcriptional regulation of apolipoprotein C-III gene expression by the orphan nuclear receptor RORalpha.</title>
        <authorList>
            <person name="Raspe E."/>
            <person name="Duez H."/>
            <person name="Gervois P."/>
            <person name="Fievet C."/>
            <person name="Fruchart J.C."/>
            <person name="Besnard S."/>
            <person name="Mariani J."/>
            <person name="Tedgui A."/>
            <person name="Staels B."/>
        </authorList>
    </citation>
    <scope>FUNCTION IN TRIGLYCERIDE METABOLISM</scope>
    <scope>DNA-BINDING</scope>
</reference>
<reference key="13">
    <citation type="journal article" date="2003" name="J. Biol. Chem.">
        <title>The co-repressor hairless protects RORalpha orphan nuclear receptor from proteasome-mediated degradation.</title>
        <authorList>
            <person name="Moraitis A.N."/>
            <person name="Giguere V."/>
        </authorList>
    </citation>
    <scope>FUNCTION AS TRANSCRIPTION ACTIVATOR</scope>
    <scope>UBIQUITINATION</scope>
    <scope>MUTAGENESIS OF LYS-357; LEU-361; VAL-364 AND GLU-509</scope>
</reference>
<reference key="14">
    <citation type="journal article" date="2004" name="J. Biol. Chem.">
        <title>Hypoxia-induced activation of the retinoic acid receptor-related orphan receptor alpha4 gene by an interaction between hypoxia-inducible factor-1 and Sp1.</title>
        <authorList>
            <person name="Miki N."/>
            <person name="Ikuta M."/>
            <person name="Matsui T."/>
        </authorList>
    </citation>
    <scope>INDUCTION BY HYPOXIA (ISOFORM 4)</scope>
</reference>
<reference key="15">
    <citation type="journal article" date="2005" name="Arterioscler. Thromb. Vasc. Biol.">
        <title>Transcriptional regulation of apolipoprotein A5 gene expression by the nuclear receptor RORalpha.</title>
        <authorList>
            <person name="Genoux A."/>
            <person name="Dehondt H."/>
            <person name="Helleboid-Chapman A."/>
            <person name="Duhem C."/>
            <person name="Hum D.W."/>
            <person name="Martin G."/>
            <person name="Pennacchio L.A."/>
            <person name="Staels B."/>
            <person name="Fruchart-Najib J."/>
            <person name="Fruchart J.C."/>
        </authorList>
    </citation>
    <scope>FUNCTION IN TRIGLYCERIDE METABOLISM</scope>
    <scope>DNA-BINDING</scope>
</reference>
<reference key="16">
    <citation type="journal article" date="2005" name="Biochem. Biophys. Res. Commun.">
        <title>Identification of the human ApoAV gene as a novel RORalpha target gene.</title>
        <authorList>
            <person name="Lind U."/>
            <person name="Nilsson T."/>
            <person name="McPheat J."/>
            <person name="Stroemstedt P.E."/>
            <person name="Bamberg K."/>
            <person name="Balendran C."/>
            <person name="Kang D."/>
        </authorList>
    </citation>
    <scope>FUNCTION IN TRIGLYCERIDE METABOLISM</scope>
    <scope>DNA-BINDING</scope>
</reference>
<reference key="17">
    <citation type="journal article" date="2006" name="Oncogene">
        <title>RORA, a large common fragile site gene, is involved in cellular stress response.</title>
        <authorList>
            <person name="Zhu Y."/>
            <person name="McAvoy S."/>
            <person name="Kuhn R."/>
            <person name="Smith D.I."/>
        </authorList>
    </citation>
    <scope>FUNCTION IN CELL GROWTH</scope>
    <scope>INDUCTION BY CELLULAR STRESS</scope>
</reference>
<reference key="18">
    <citation type="journal article" date="2007" name="Biochem. Biophys. Res. Commun.">
        <title>Extracellular signal-regulated kinase-2 phosphorylates RORalpha4 in vitro.</title>
        <authorList>
            <person name="Lechtken A."/>
            <person name="Hoernig M."/>
            <person name="Werz O."/>
            <person name="Corvey N."/>
            <person name="Zoendorf I."/>
            <person name="Dingermann T."/>
            <person name="Brandes R."/>
            <person name="Steinhilber D."/>
        </authorList>
    </citation>
    <scope>PHOSPHORYLATION AT THR-183</scope>
    <scope>FUNCTION</scope>
    <scope>MUTAGENESIS OF THR-183</scope>
</reference>
<reference key="19">
    <citation type="journal article" date="2008" name="Arterioscler. Thromb. Vasc. Biol.">
        <title>Transcriptional activation of HIF-1 by RORalpha and its role in hypoxia signaling.</title>
        <authorList>
            <person name="Kim E.J."/>
            <person name="Yoo Y.G."/>
            <person name="Yang W.K."/>
            <person name="Lim Y.S."/>
            <person name="Na T.Y."/>
            <person name="Lee I.K."/>
            <person name="Lee M.O."/>
        </authorList>
    </citation>
    <scope>FUNCTION IN HYPOXIA SIGNALING</scope>
    <scope>INTERACTION WITH HIF1A</scope>
    <scope>INDUCTION BY HYPOXIA</scope>
    <scope>SUBCELLULAR LOCATION</scope>
</reference>
<reference key="20">
    <citation type="journal article" date="2008" name="J. Immunol.">
        <title>Isoform-specific inhibition of ROR alpha-mediated transcriptional activation by human FOXP3.</title>
        <authorList>
            <person name="Du J."/>
            <person name="Huang C."/>
            <person name="Zhou B."/>
            <person name="Ziegler S.F."/>
        </authorList>
    </citation>
    <scope>FUNCTION</scope>
    <scope>INTERACTION WITH FOXP3</scope>
    <scope>SUBCELLULAR LOCATION</scope>
    <scope>TISSUE SPECIFICITY</scope>
    <scope>MUTAGENESIS OF 510-LEU-PHE-511</scope>
</reference>
<reference key="21">
    <citation type="journal article" date="2008" name="J. Neurochem.">
        <title>Phosphorylation and transcriptional activity regulation of retinoid-related orphan receptor alpha 1 by protein kinases C.</title>
        <authorList>
            <person name="Duplus E."/>
            <person name="Gras C."/>
            <person name="Soubeyre V."/>
            <person name="Vodjdani G."/>
            <person name="Lemaigre-Dubreuil Y."/>
            <person name="Brugg B."/>
        </authorList>
    </citation>
    <scope>FUNCTION AS TRANSCRIPTION ACTIVATOR</scope>
    <scope>PHOSPHORYLATION</scope>
    <scope>SUBCELLULAR LOCATION</scope>
</reference>
<reference key="22">
    <citation type="journal article" date="2009" name="Biochem. Biophys. Res. Commun.">
        <title>SUMOylation of RORalpha potentiates transcriptional activation function.</title>
        <authorList>
            <person name="Hwang E.J."/>
            <person name="Lee J.M."/>
            <person name="Jeong J."/>
            <person name="Park J.H."/>
            <person name="Yang Y."/>
            <person name="Lim J.S."/>
            <person name="Kim J.H."/>
            <person name="Baek S.H."/>
            <person name="Kim K.I."/>
        </authorList>
    </citation>
    <scope>SUMOYLATION AT LYS-240</scope>
    <scope>MUTAGENESIS OF LYS-240 AND LYS-441</scope>
</reference>
<reference key="23">
    <citation type="journal article" date="2009" name="Nucl. Recept. Signal.">
        <title>Retinoid-related orphan receptors (RORs): critical roles in development, immunity, circadian rhythm, and cellular metabolism.</title>
        <authorList>
            <person name="Jetten A.M."/>
        </authorList>
    </citation>
    <scope>REVIEW ON FUNCTION</scope>
</reference>
<reference key="24">
    <citation type="journal article" date="2010" name="J. Biol. Chem.">
        <title>Modulation of retinoic acid receptor-related orphan receptor alpha and gamma activity by 7-oxygenated sterol ligands.</title>
        <authorList>
            <person name="Wang Y."/>
            <person name="Kumar N."/>
            <person name="Solt L.A."/>
            <person name="Richardson T.I."/>
            <person name="Helvering L.M."/>
            <person name="Crumbley C."/>
            <person name="Garcia-Ordonez R.D."/>
            <person name="Stayrook K.R."/>
            <person name="Zhang X."/>
            <person name="Novick S."/>
            <person name="Chalmers M.J."/>
            <person name="Griffin P.R."/>
            <person name="Burris T.P."/>
        </authorList>
    </citation>
    <scope>FUNCTION IN GLUCOSE METABOLISM REGULATION</scope>
    <scope>IDENTIFICATION OF LIGANDS</scope>
</reference>
<reference key="25">
    <citation type="journal article" date="2011" name="J. Biol. Rhythms">
        <title>Modulation of clock gene expression by the transcriptional coregulator receptor interacting protein 140 (RIP140).</title>
        <authorList>
            <person name="Poliandri A.H."/>
            <person name="Gamsby J.J."/>
            <person name="Christian M."/>
            <person name="Spinella M.J."/>
            <person name="Loros J.J."/>
            <person name="Dunlap J.C."/>
            <person name="Parker M.G."/>
        </authorList>
    </citation>
    <scope>INTERACTION WITH NRIP1</scope>
</reference>
<reference key="26">
    <citation type="journal article" date="2011" name="Nature">
        <title>Suppression of TH17 differentiation and autoimmunity by a synthetic ROR ligand.</title>
        <authorList>
            <person name="Solt L.A."/>
            <person name="Kumar N."/>
            <person name="Nuhant P."/>
            <person name="Wang Y."/>
            <person name="Lauer J.L."/>
            <person name="Liu J."/>
            <person name="Istrate M.A."/>
            <person name="Kamenecka T.M."/>
            <person name="Roush W.R."/>
            <person name="Vidovic D."/>
            <person name="Schuerer S.C."/>
            <person name="Xu J."/>
            <person name="Wagoner G."/>
            <person name="Drew P.D."/>
            <person name="Griffin P.R."/>
            <person name="Burris T.P."/>
        </authorList>
    </citation>
    <scope>FUNCTION IN T(H)17 CELLS DIFFERENTIATION</scope>
    <scope>IDENTIFICATION OF LIGANDS</scope>
</reference>
<reference key="27">
    <citation type="journal article" date="2011" name="Nature">
        <title>Cryptochromes mediate rhythmic repression of the glucocorticoid receptor.</title>
        <authorList>
            <person name="Lamia K.A."/>
            <person name="Papp S.J."/>
            <person name="Yu R.T."/>
            <person name="Barish G.D."/>
            <person name="Uhlenhaut N.H."/>
            <person name="Jonker J.W."/>
            <person name="Downes M."/>
            <person name="Evans R.M."/>
        </authorList>
    </citation>
    <scope>INTERACTION WITH CRY1</scope>
</reference>
<reference key="28">
    <citation type="journal article" date="2012" name="Mol. Cell">
        <title>EZH2 generates a methyl degron that is recognized by the DCAF1/DDB1/CUL4 E3 ubiquitin ligase complex.</title>
        <authorList>
            <person name="Lee J.M."/>
            <person name="Lee J.S."/>
            <person name="Kim H."/>
            <person name="Kim K."/>
            <person name="Park H."/>
            <person name="Kim J.Y."/>
            <person name="Lee S.H."/>
            <person name="Kim I.S."/>
            <person name="Kim J."/>
            <person name="Lee M."/>
            <person name="Chung C.H."/>
            <person name="Seo S.B."/>
            <person name="Yoon J.B."/>
            <person name="Ko E."/>
            <person name="Noh D.Y."/>
            <person name="Kim K.I."/>
            <person name="Kim K.K."/>
            <person name="Baek S.H."/>
        </authorList>
    </citation>
    <scope>METHYLATION AT LYS-38</scope>
</reference>
<reference key="29">
    <citation type="journal article" date="2012" name="Trends Endocrinol. Metab.">
        <title>Action of RORs and their ligands in (patho)physiology.</title>
        <authorList>
            <person name="Solt L.A."/>
            <person name="Burris T.P."/>
        </authorList>
    </citation>
    <scope>REVIEW ON FUNCTION AND LIGANDS</scope>
</reference>
<reference key="30">
    <citation type="journal article" date="2018" name="Am. J. Hum. Genet.">
        <title>Dual molecular effects of dominant RORA mutations cause two variants of syndromic intellectual disability with either autism or cerebellar ataxia.</title>
        <authorList>
            <person name="Guissart C."/>
            <person name="Latypova X."/>
            <person name="Rollier P."/>
            <person name="Khan T.N."/>
            <person name="Stamberger H."/>
            <person name="McWalter K."/>
            <person name="Cho M.T."/>
            <person name="Kjaergaard S."/>
            <person name="Weckhuysen S."/>
            <person name="Lesca G."/>
            <person name="Besnard T."/>
            <person name="Ounap K."/>
            <person name="Schema L."/>
            <person name="Chiocchetti A.G."/>
            <person name="McDonald M."/>
            <person name="de Bellescize J."/>
            <person name="Vincent M."/>
            <person name="Van Esch H."/>
            <person name="Sattler S."/>
            <person name="Forghani I."/>
            <person name="Thiffault I."/>
            <person name="Freitag C.M."/>
            <person name="Barbouth D.S."/>
            <person name="Cadieux-Dion M."/>
            <person name="Willaert R."/>
            <person name="Guillen Sacoto M.J."/>
            <person name="Safina N.P."/>
            <person name="Dubourg C."/>
            <person name="Grote L."/>
            <person name="Carre W."/>
            <person name="Saunders C."/>
            <person name="Pajusalu S."/>
            <person name="Farrow E."/>
            <person name="Boland A."/>
            <person name="Karlowicz D.H."/>
            <person name="Deleuze J.F."/>
            <person name="Wojcik M.H."/>
            <person name="Pressman R."/>
            <person name="Isidor B."/>
            <person name="Vogels A."/>
            <person name="Van Paesschen W."/>
            <person name="Al-Gazali L."/>
            <person name="Al Shamsi A.M."/>
            <person name="Claustres M."/>
            <person name="Pujol A."/>
            <person name="Sanders S.J."/>
            <person name="Rivier F."/>
            <person name="Leboucq N."/>
            <person name="Cogne B."/>
            <person name="Sasorith S."/>
            <person name="Sanlaville D."/>
            <person name="Retterer K."/>
            <person name="Odent S."/>
            <person name="Katsanis N."/>
            <person name="Bezieau S."/>
            <person name="Koenig M."/>
            <person name="Davis E.E."/>
            <person name="Pasquier L."/>
            <person name="Kuery S."/>
        </authorList>
    </citation>
    <scope>INVOLVEMENT IN IDDECA</scope>
    <scope>VARIANTS IDDECA SER-90; ALA-92; ARG-94; ARG-409; GLN-462 AND 500-ARG--GLY-523 DEL</scope>
    <scope>CHARACTERIZATION OF VARIANTS IDDECA ALA-92; ARG-94 AND GLN-462</scope>
    <scope>FUNCTION</scope>
    <scope>TISSUE SPECIFICITY</scope>
    <scope>VARIANT ALA-476</scope>
    <scope>CHARACTERIZATION OF VARIANT ALA-476</scope>
</reference>
<reference key="31">
    <citation type="journal article" date="2006" name="Science">
        <title>The consensus coding sequences of human breast and colorectal cancers.</title>
        <authorList>
            <person name="Sjoeblom T."/>
            <person name="Jones S."/>
            <person name="Wood L.D."/>
            <person name="Parsons D.W."/>
            <person name="Lin J."/>
            <person name="Barber T.D."/>
            <person name="Mandelker D."/>
            <person name="Leary R.J."/>
            <person name="Ptak J."/>
            <person name="Silliman N."/>
            <person name="Szabo S."/>
            <person name="Buckhaults P."/>
            <person name="Farrell C."/>
            <person name="Meeh P."/>
            <person name="Markowitz S.D."/>
            <person name="Willis J."/>
            <person name="Dawson D."/>
            <person name="Willson J.K.V."/>
            <person name="Gazdar A.F."/>
            <person name="Hartigan J."/>
            <person name="Wu L."/>
            <person name="Liu C."/>
            <person name="Parmigiani G."/>
            <person name="Park B.H."/>
            <person name="Bachman K.E."/>
            <person name="Papadopoulos N."/>
            <person name="Vogelstein B."/>
            <person name="Kinzler K.W."/>
            <person name="Velculescu V.E."/>
        </authorList>
    </citation>
    <scope>VARIANT [LARGE SCALE ANALYSIS] SER-18 (ISOFORM 2)</scope>
</reference>
<reference key="32">
    <citation type="journal article" date="2002" name="Structure">
        <title>X-ray structure of the hRORalpha LBD at 1.63 A: structural and functional data that cholesterol or a cholesterol derivative is the natural ligand of RORalpha.</title>
        <authorList>
            <person name="Kallen J.A."/>
            <person name="Schlaeppi J.-M."/>
            <person name="Bitsch F."/>
            <person name="Geisse S."/>
            <person name="Geiser M."/>
            <person name="Delhon I."/>
            <person name="Fournier B."/>
        </authorList>
    </citation>
    <scope>X-RAY CRYSTALLOGRAPHY (1.63 ANGSTROMS) OF 271-523 IN COMPLEX WITH CHOLESTEROL</scope>
    <scope>FUNCTION AS TRANSCRIPTION ACTIVATOR</scope>
    <scope>IDENTIFICATION OF LIGANDS</scope>
    <scope>MUTAGENESIS OF CYS-323; ALA-330; ALA-371; PHE-399; HIS-484 AND TYR-507</scope>
    <scope>IDENTIFICATION BY MASS SPECTROMETRY</scope>
</reference>
<reference key="33">
    <citation type="journal article" date="2004" name="J. Biol. Chem.">
        <title>Crystal structure of the human RORalpha Ligand binding domain in complex with cholesterol sulfate at 2.2 A.</title>
        <authorList>
            <person name="Kallen J."/>
            <person name="Schlaeppi J.-M."/>
            <person name="Bitsch F."/>
            <person name="Delhon I."/>
            <person name="Fournier B."/>
        </authorList>
    </citation>
    <scope>X-RAY CRYSTALLOGRAPHY (2.2 ANGSTROMS) OF 271-523 IN COMPLEX WITH CHOLESTEROL SULFATE</scope>
    <scope>MUTAGENESIS OF CYS-288; CYS-323; ALA-330; LYS-339 AND GLU-509</scope>
    <scope>IDENTIFICATION BY MASS SPECTROMETRY</scope>
</reference>
<evidence type="ECO:0000250" key="1"/>
<evidence type="ECO:0000250" key="2">
    <source>
        <dbReference type="UniProtKB" id="P51448"/>
    </source>
</evidence>
<evidence type="ECO:0000255" key="3">
    <source>
        <dbReference type="PROSITE-ProRule" id="PRU00407"/>
    </source>
</evidence>
<evidence type="ECO:0000255" key="4">
    <source>
        <dbReference type="PROSITE-ProRule" id="PRU01189"/>
    </source>
</evidence>
<evidence type="ECO:0000256" key="5">
    <source>
        <dbReference type="SAM" id="MobiDB-lite"/>
    </source>
</evidence>
<evidence type="ECO:0000269" key="6">
    <source>
    </source>
</evidence>
<evidence type="ECO:0000269" key="7">
    <source>
    </source>
</evidence>
<evidence type="ECO:0000269" key="8">
    <source>
    </source>
</evidence>
<evidence type="ECO:0000269" key="9">
    <source>
    </source>
</evidence>
<evidence type="ECO:0000269" key="10">
    <source>
    </source>
</evidence>
<evidence type="ECO:0000269" key="11">
    <source>
    </source>
</evidence>
<evidence type="ECO:0000269" key="12">
    <source>
    </source>
</evidence>
<evidence type="ECO:0000269" key="13">
    <source>
    </source>
</evidence>
<evidence type="ECO:0000269" key="14">
    <source>
    </source>
</evidence>
<evidence type="ECO:0000269" key="15">
    <source>
    </source>
</evidence>
<evidence type="ECO:0000269" key="16">
    <source>
    </source>
</evidence>
<evidence type="ECO:0000269" key="17">
    <source>
    </source>
</evidence>
<evidence type="ECO:0000269" key="18">
    <source>
    </source>
</evidence>
<evidence type="ECO:0000269" key="19">
    <source>
    </source>
</evidence>
<evidence type="ECO:0000269" key="20">
    <source>
    </source>
</evidence>
<evidence type="ECO:0000269" key="21">
    <source>
    </source>
</evidence>
<evidence type="ECO:0000269" key="22">
    <source>
    </source>
</evidence>
<evidence type="ECO:0000269" key="23">
    <source>
    </source>
</evidence>
<evidence type="ECO:0000269" key="24">
    <source>
    </source>
</evidence>
<evidence type="ECO:0000269" key="25">
    <source>
    </source>
</evidence>
<evidence type="ECO:0000269" key="26">
    <source>
    </source>
</evidence>
<evidence type="ECO:0000269" key="27">
    <source>
    </source>
</evidence>
<evidence type="ECO:0000269" key="28">
    <source>
    </source>
</evidence>
<evidence type="ECO:0000269" key="29">
    <source>
    </source>
</evidence>
<evidence type="ECO:0000269" key="30">
    <source>
    </source>
</evidence>
<evidence type="ECO:0000303" key="31">
    <source>
    </source>
</evidence>
<evidence type="ECO:0000303" key="32">
    <source>
    </source>
</evidence>
<evidence type="ECO:0000303" key="33">
    <source>
    </source>
</evidence>
<evidence type="ECO:0000303" key="34">
    <source ref="3"/>
</evidence>
<evidence type="ECO:0000305" key="35"/>
<evidence type="ECO:0007744" key="36">
    <source>
    </source>
</evidence>
<evidence type="ECO:0007829" key="37">
    <source>
        <dbReference type="PDB" id="1N83"/>
    </source>
</evidence>
<evidence type="ECO:0007829" key="38">
    <source>
        <dbReference type="PDB" id="4S15"/>
    </source>
</evidence>
<name>RORA_HUMAN</name>
<accession>P35398</accession>
<accession>P35397</accession>
<accession>P35399</accession>
<accession>P45445</accession>
<accession>Q495X4</accession>
<accession>Q96H83</accession>
<protein>
    <recommendedName>
        <fullName>Nuclear receptor ROR-alpha</fullName>
    </recommendedName>
    <alternativeName>
        <fullName>Nuclear receptor RZR-alpha</fullName>
    </alternativeName>
    <alternativeName>
        <fullName>Nuclear receptor subfamily 1 group F member 1</fullName>
    </alternativeName>
    <alternativeName>
        <fullName>RAR-related orphan receptor A</fullName>
    </alternativeName>
    <alternativeName>
        <fullName>Retinoid-related orphan receptor-alpha</fullName>
    </alternativeName>
</protein>
<sequence length="523" mass="58975">MESAPAAPDPAASEPGSSGADAAAGSRETPLNQESARKSEPPAPVRRQSYSSTSRGISVTKKTHTSQIEIIPCKICGDKSSGIHYGVITCEGCKGFFRRSQQSNATYSCPRQKNCLIDRTSRNRCQHCRLQKCLAVGMSRDAVKFGRMSKKQRDSLYAEVQKHRMQQQQRDHQQQPGEAEPLTPTYNISANGLTELHDDLSNYIDGHTPEGSKADSAVSSFYLDIQPSPDQSGLDINGIKPEPICDYTPASGFFPYCSFTNGETSPTVSMAELEHLAQNISKSHLETCQYLREELQQITWQTFLQEEIENYQNKQREVMWQLCAIKITEAIQYVVEFAKRIDGFMELCQNDQIVLLKAGSLEVVFIRMCRAFDSQNNTVYFDGKYASPDVFKSLGCEDFISFVFEFGKSLCSMHLTEDEIALFSAFVLMSADRSWLQEKVKIEKLQQKIQLALQHVLQKNHREDGILTKLICKVSTLRALCGRHTEKLMAFKAIYPDIVRLHFPPLYKELFTSEFEPAMQIDG</sequence>
<organism>
    <name type="scientific">Homo sapiens</name>
    <name type="common">Human</name>
    <dbReference type="NCBI Taxonomy" id="9606"/>
    <lineage>
        <taxon>Eukaryota</taxon>
        <taxon>Metazoa</taxon>
        <taxon>Chordata</taxon>
        <taxon>Craniata</taxon>
        <taxon>Vertebrata</taxon>
        <taxon>Euteleostomi</taxon>
        <taxon>Mammalia</taxon>
        <taxon>Eutheria</taxon>
        <taxon>Euarchontoglires</taxon>
        <taxon>Primates</taxon>
        <taxon>Haplorrhini</taxon>
        <taxon>Catarrhini</taxon>
        <taxon>Hominidae</taxon>
        <taxon>Homo</taxon>
    </lineage>
</organism>